<gene>
    <name evidence="1" type="primary">lepA</name>
    <name type="ordered locus">PXO_01714</name>
</gene>
<organism>
    <name type="scientific">Xanthomonas oryzae pv. oryzae (strain PXO99A)</name>
    <dbReference type="NCBI Taxonomy" id="360094"/>
    <lineage>
        <taxon>Bacteria</taxon>
        <taxon>Pseudomonadati</taxon>
        <taxon>Pseudomonadota</taxon>
        <taxon>Gammaproteobacteria</taxon>
        <taxon>Lysobacterales</taxon>
        <taxon>Lysobacteraceae</taxon>
        <taxon>Xanthomonas</taxon>
    </lineage>
</organism>
<evidence type="ECO:0000255" key="1">
    <source>
        <dbReference type="HAMAP-Rule" id="MF_00071"/>
    </source>
</evidence>
<proteinExistence type="inferred from homology"/>
<sequence length="596" mass="65749">MRNIRNFSIIAHVDHGKSTLADRIIQLCGGLQAREMEAQVLDSNPIERERGITIKAQSVSLPYTAKDGQVYHLNFIDTPGHVDFSYEVSRSLAACEGALLVVDAAQGVEAQSVANCYTAVEQGLEVVPVLNKIDLPTADVDRAKAEIEAVIGIDAEDAVAVSAKTGLNIDLVLEAIVHRIPPPTPRDTDKLQALIIDSWFDNYLGVVSLVRVMQGEIKPGSKILVMSTGRTHLVDKVGVFTPKRKELSALGAGEVGWINASIKDVHGAPVGDTLTLAADPAPHALPGFQEMQPRVFAGLFPVDAEDYPDLREALDKLRLNDAALRFEPESSEAMGFGFRCGFLGMLHMEIVQERLEREYNLNLISTAPTVVYEVLKTDGSVIPMDNPSKLPPLNNVEEIREPIIRANILTPPDYVGNIITLCEEKRGSQIGINYLGSQVQISYELPMAEVVLDFFDKLKSVSRGYASLDYHFLRFDPGPFVRVDTLINGDKVDALSIIVHRSYADRRGRELCEKMKDLIPRQMFDVAIQAAVGSQIISRSTVKAMRKNVLAKCYGGDVSRKKKLLEKQKEGKKRMKQVGRVEIPQEAFLAVLQMDK</sequence>
<keyword id="KW-0997">Cell inner membrane</keyword>
<keyword id="KW-1003">Cell membrane</keyword>
<keyword id="KW-0342">GTP-binding</keyword>
<keyword id="KW-0378">Hydrolase</keyword>
<keyword id="KW-0472">Membrane</keyword>
<keyword id="KW-0547">Nucleotide-binding</keyword>
<keyword id="KW-0648">Protein biosynthesis</keyword>
<feature type="chain" id="PRO_1000117033" description="Elongation factor 4">
    <location>
        <begin position="1"/>
        <end position="596"/>
    </location>
</feature>
<feature type="domain" description="tr-type G">
    <location>
        <begin position="2"/>
        <end position="184"/>
    </location>
</feature>
<feature type="binding site" evidence="1">
    <location>
        <begin position="14"/>
        <end position="19"/>
    </location>
    <ligand>
        <name>GTP</name>
        <dbReference type="ChEBI" id="CHEBI:37565"/>
    </ligand>
</feature>
<feature type="binding site" evidence="1">
    <location>
        <begin position="131"/>
        <end position="134"/>
    </location>
    <ligand>
        <name>GTP</name>
        <dbReference type="ChEBI" id="CHEBI:37565"/>
    </ligand>
</feature>
<dbReference type="EC" id="3.6.5.n1" evidence="1"/>
<dbReference type="EMBL" id="CP000967">
    <property type="protein sequence ID" value="ACD59682.1"/>
    <property type="molecule type" value="Genomic_DNA"/>
</dbReference>
<dbReference type="RefSeq" id="WP_012445254.1">
    <property type="nucleotide sequence ID" value="NC_010717.2"/>
</dbReference>
<dbReference type="SMR" id="B2SRY0"/>
<dbReference type="GeneID" id="77336752"/>
<dbReference type="KEGG" id="xop:PXO_01714"/>
<dbReference type="eggNOG" id="COG0481">
    <property type="taxonomic scope" value="Bacteria"/>
</dbReference>
<dbReference type="HOGENOM" id="CLU_009995_3_3_6"/>
<dbReference type="Proteomes" id="UP000001740">
    <property type="component" value="Chromosome"/>
</dbReference>
<dbReference type="GO" id="GO:0005886">
    <property type="term" value="C:plasma membrane"/>
    <property type="evidence" value="ECO:0007669"/>
    <property type="project" value="UniProtKB-SubCell"/>
</dbReference>
<dbReference type="GO" id="GO:0005525">
    <property type="term" value="F:GTP binding"/>
    <property type="evidence" value="ECO:0007669"/>
    <property type="project" value="UniProtKB-UniRule"/>
</dbReference>
<dbReference type="GO" id="GO:0003924">
    <property type="term" value="F:GTPase activity"/>
    <property type="evidence" value="ECO:0007669"/>
    <property type="project" value="UniProtKB-UniRule"/>
</dbReference>
<dbReference type="GO" id="GO:0097216">
    <property type="term" value="F:guanosine tetraphosphate binding"/>
    <property type="evidence" value="ECO:0007669"/>
    <property type="project" value="UniProtKB-ARBA"/>
</dbReference>
<dbReference type="GO" id="GO:0043022">
    <property type="term" value="F:ribosome binding"/>
    <property type="evidence" value="ECO:0007669"/>
    <property type="project" value="UniProtKB-UniRule"/>
</dbReference>
<dbReference type="GO" id="GO:0003746">
    <property type="term" value="F:translation elongation factor activity"/>
    <property type="evidence" value="ECO:0007669"/>
    <property type="project" value="UniProtKB-UniRule"/>
</dbReference>
<dbReference type="GO" id="GO:0045727">
    <property type="term" value="P:positive regulation of translation"/>
    <property type="evidence" value="ECO:0007669"/>
    <property type="project" value="UniProtKB-UniRule"/>
</dbReference>
<dbReference type="CDD" id="cd03699">
    <property type="entry name" value="EF4_II"/>
    <property type="match status" value="1"/>
</dbReference>
<dbReference type="CDD" id="cd16260">
    <property type="entry name" value="EF4_III"/>
    <property type="match status" value="1"/>
</dbReference>
<dbReference type="CDD" id="cd01890">
    <property type="entry name" value="LepA"/>
    <property type="match status" value="1"/>
</dbReference>
<dbReference type="CDD" id="cd03709">
    <property type="entry name" value="lepA_C"/>
    <property type="match status" value="1"/>
</dbReference>
<dbReference type="FunFam" id="3.40.50.300:FF:000078">
    <property type="entry name" value="Elongation factor 4"/>
    <property type="match status" value="1"/>
</dbReference>
<dbReference type="FunFam" id="2.40.30.10:FF:000015">
    <property type="entry name" value="Translation factor GUF1, mitochondrial"/>
    <property type="match status" value="1"/>
</dbReference>
<dbReference type="FunFam" id="3.30.70.240:FF:000007">
    <property type="entry name" value="Translation factor GUF1, mitochondrial"/>
    <property type="match status" value="1"/>
</dbReference>
<dbReference type="FunFam" id="3.30.70.2570:FF:000001">
    <property type="entry name" value="Translation factor GUF1, mitochondrial"/>
    <property type="match status" value="1"/>
</dbReference>
<dbReference type="FunFam" id="3.30.70.870:FF:000004">
    <property type="entry name" value="Translation factor GUF1, mitochondrial"/>
    <property type="match status" value="1"/>
</dbReference>
<dbReference type="Gene3D" id="3.30.70.240">
    <property type="match status" value="1"/>
</dbReference>
<dbReference type="Gene3D" id="3.30.70.2570">
    <property type="entry name" value="Elongation factor 4, C-terminal domain"/>
    <property type="match status" value="1"/>
</dbReference>
<dbReference type="Gene3D" id="3.30.70.870">
    <property type="entry name" value="Elongation Factor G (Translational Gtpase), domain 3"/>
    <property type="match status" value="1"/>
</dbReference>
<dbReference type="Gene3D" id="3.40.50.300">
    <property type="entry name" value="P-loop containing nucleotide triphosphate hydrolases"/>
    <property type="match status" value="1"/>
</dbReference>
<dbReference type="Gene3D" id="2.40.30.10">
    <property type="entry name" value="Translation factors"/>
    <property type="match status" value="1"/>
</dbReference>
<dbReference type="HAMAP" id="MF_00071">
    <property type="entry name" value="LepA"/>
    <property type="match status" value="1"/>
</dbReference>
<dbReference type="InterPro" id="IPR006297">
    <property type="entry name" value="EF-4"/>
</dbReference>
<dbReference type="InterPro" id="IPR035647">
    <property type="entry name" value="EFG_III/V"/>
</dbReference>
<dbReference type="InterPro" id="IPR000640">
    <property type="entry name" value="EFG_V-like"/>
</dbReference>
<dbReference type="InterPro" id="IPR004161">
    <property type="entry name" value="EFTu-like_2"/>
</dbReference>
<dbReference type="InterPro" id="IPR031157">
    <property type="entry name" value="G_TR_CS"/>
</dbReference>
<dbReference type="InterPro" id="IPR038363">
    <property type="entry name" value="LepA_C_sf"/>
</dbReference>
<dbReference type="InterPro" id="IPR013842">
    <property type="entry name" value="LepA_CTD"/>
</dbReference>
<dbReference type="InterPro" id="IPR035654">
    <property type="entry name" value="LepA_IV"/>
</dbReference>
<dbReference type="InterPro" id="IPR027417">
    <property type="entry name" value="P-loop_NTPase"/>
</dbReference>
<dbReference type="InterPro" id="IPR005225">
    <property type="entry name" value="Small_GTP-bd"/>
</dbReference>
<dbReference type="InterPro" id="IPR000795">
    <property type="entry name" value="T_Tr_GTP-bd_dom"/>
</dbReference>
<dbReference type="InterPro" id="IPR009000">
    <property type="entry name" value="Transl_B-barrel_sf"/>
</dbReference>
<dbReference type="NCBIfam" id="TIGR01393">
    <property type="entry name" value="lepA"/>
    <property type="match status" value="1"/>
</dbReference>
<dbReference type="NCBIfam" id="TIGR00231">
    <property type="entry name" value="small_GTP"/>
    <property type="match status" value="1"/>
</dbReference>
<dbReference type="PANTHER" id="PTHR43512:SF4">
    <property type="entry name" value="TRANSLATION FACTOR GUF1 HOMOLOG, CHLOROPLASTIC"/>
    <property type="match status" value="1"/>
</dbReference>
<dbReference type="PANTHER" id="PTHR43512">
    <property type="entry name" value="TRANSLATION FACTOR GUF1-RELATED"/>
    <property type="match status" value="1"/>
</dbReference>
<dbReference type="Pfam" id="PF00679">
    <property type="entry name" value="EFG_C"/>
    <property type="match status" value="1"/>
</dbReference>
<dbReference type="Pfam" id="PF00009">
    <property type="entry name" value="GTP_EFTU"/>
    <property type="match status" value="1"/>
</dbReference>
<dbReference type="Pfam" id="PF03144">
    <property type="entry name" value="GTP_EFTU_D2"/>
    <property type="match status" value="1"/>
</dbReference>
<dbReference type="Pfam" id="PF06421">
    <property type="entry name" value="LepA_C"/>
    <property type="match status" value="1"/>
</dbReference>
<dbReference type="PRINTS" id="PR00315">
    <property type="entry name" value="ELONGATNFCT"/>
</dbReference>
<dbReference type="SMART" id="SM00838">
    <property type="entry name" value="EFG_C"/>
    <property type="match status" value="1"/>
</dbReference>
<dbReference type="SUPFAM" id="SSF54980">
    <property type="entry name" value="EF-G C-terminal domain-like"/>
    <property type="match status" value="2"/>
</dbReference>
<dbReference type="SUPFAM" id="SSF52540">
    <property type="entry name" value="P-loop containing nucleoside triphosphate hydrolases"/>
    <property type="match status" value="1"/>
</dbReference>
<dbReference type="SUPFAM" id="SSF50447">
    <property type="entry name" value="Translation proteins"/>
    <property type="match status" value="1"/>
</dbReference>
<dbReference type="PROSITE" id="PS00301">
    <property type="entry name" value="G_TR_1"/>
    <property type="match status" value="1"/>
</dbReference>
<dbReference type="PROSITE" id="PS51722">
    <property type="entry name" value="G_TR_2"/>
    <property type="match status" value="1"/>
</dbReference>
<reference key="1">
    <citation type="journal article" date="2008" name="BMC Genomics">
        <title>Genome sequence and rapid evolution of the rice pathogen Xanthomonas oryzae pv. oryzae PXO99A.</title>
        <authorList>
            <person name="Salzberg S.L."/>
            <person name="Sommer D.D."/>
            <person name="Schatz M.C."/>
            <person name="Phillippy A.M."/>
            <person name="Rabinowicz P.D."/>
            <person name="Tsuge S."/>
            <person name="Furutani A."/>
            <person name="Ochiai H."/>
            <person name="Delcher A.L."/>
            <person name="Kelley D."/>
            <person name="Madupu R."/>
            <person name="Puiu D."/>
            <person name="Radune D."/>
            <person name="Shumway M."/>
            <person name="Trapnell C."/>
            <person name="Aparna G."/>
            <person name="Jha G."/>
            <person name="Pandey A."/>
            <person name="Patil P.B."/>
            <person name="Ishihara H."/>
            <person name="Meyer D.F."/>
            <person name="Szurek B."/>
            <person name="Verdier V."/>
            <person name="Koebnik R."/>
            <person name="Dow J.M."/>
            <person name="Ryan R.P."/>
            <person name="Hirata H."/>
            <person name="Tsuyumu S."/>
            <person name="Won Lee S."/>
            <person name="Seo Y.-S."/>
            <person name="Sriariyanum M."/>
            <person name="Ronald P.C."/>
            <person name="Sonti R.V."/>
            <person name="Van Sluys M.-A."/>
            <person name="Leach J.E."/>
            <person name="White F.F."/>
            <person name="Bogdanove A.J."/>
        </authorList>
    </citation>
    <scope>NUCLEOTIDE SEQUENCE [LARGE SCALE GENOMIC DNA]</scope>
    <source>
        <strain>PXO99A</strain>
    </source>
</reference>
<accession>B2SRY0</accession>
<protein>
    <recommendedName>
        <fullName evidence="1">Elongation factor 4</fullName>
        <shortName evidence="1">EF-4</shortName>
        <ecNumber evidence="1">3.6.5.n1</ecNumber>
    </recommendedName>
    <alternativeName>
        <fullName evidence="1">Ribosomal back-translocase LepA</fullName>
    </alternativeName>
</protein>
<comment type="function">
    <text evidence="1">Required for accurate and efficient protein synthesis under certain stress conditions. May act as a fidelity factor of the translation reaction, by catalyzing a one-codon backward translocation of tRNAs on improperly translocated ribosomes. Back-translocation proceeds from a post-translocation (POST) complex to a pre-translocation (PRE) complex, thus giving elongation factor G a second chance to translocate the tRNAs correctly. Binds to ribosomes in a GTP-dependent manner.</text>
</comment>
<comment type="catalytic activity">
    <reaction evidence="1">
        <text>GTP + H2O = GDP + phosphate + H(+)</text>
        <dbReference type="Rhea" id="RHEA:19669"/>
        <dbReference type="ChEBI" id="CHEBI:15377"/>
        <dbReference type="ChEBI" id="CHEBI:15378"/>
        <dbReference type="ChEBI" id="CHEBI:37565"/>
        <dbReference type="ChEBI" id="CHEBI:43474"/>
        <dbReference type="ChEBI" id="CHEBI:58189"/>
        <dbReference type="EC" id="3.6.5.n1"/>
    </reaction>
</comment>
<comment type="subcellular location">
    <subcellularLocation>
        <location evidence="1">Cell inner membrane</location>
        <topology evidence="1">Peripheral membrane protein</topology>
        <orientation evidence="1">Cytoplasmic side</orientation>
    </subcellularLocation>
</comment>
<comment type="similarity">
    <text evidence="1">Belongs to the TRAFAC class translation factor GTPase superfamily. Classic translation factor GTPase family. LepA subfamily.</text>
</comment>
<name>LEPA_XANOP</name>